<protein>
    <recommendedName>
        <fullName>Ulvan lyase</fullName>
        <ecNumber evidence="4">4.2.2.-</ecNumber>
    </recommendedName>
</protein>
<organism>
    <name type="scientific">Alteromonas sp. (strain LOR)</name>
    <dbReference type="NCBI Taxonomy" id="1537994"/>
    <lineage>
        <taxon>Bacteria</taxon>
        <taxon>Pseudomonadati</taxon>
        <taxon>Pseudomonadota</taxon>
        <taxon>Gammaproteobacteria</taxon>
        <taxon>Alteromonadales</taxon>
        <taxon>Alteromonadaceae</taxon>
        <taxon>Alteromonas/Salinimonas group</taxon>
        <taxon>Alteromonas</taxon>
    </lineage>
</organism>
<sequence>MIRNDTMLKGQFVLKKTQIALSAALMGSVLLTGCVTQKSNTESNGPKDTQVSYVEYFADNAVGNPLAIVQHPAAIHKNGITYVSYQGPKEDPFVATYNHSTKEWSGPFKAGTSELGRRDGGKKFDNHGKPTMLIDDEGYVHIFYGGHGGHSSNGKNPLGNTHFGANKHAVSKKPYDITQWEDLDNITPFGTYNQVVKMDNGDIYLFFRHGAHRSDWVYQKSVDNGRTFSSPVSFLKHKRRTDIEAVDSWYAWVGKGEGDNLIVSYDYHVCWDGGAGINGRGHTTERHDVYFMNFNTKTNQWSNVEGESLALPVTKEVADDKTLAMKTGALWTFNGTSHLDNEGHPHIAINAGVDRGAKTGGPKQTRHVWWDGKKWLGGNNIIEGYQGVSRGDFRVTDPSDIRYLVTYEKEGDAVLSWWDSDEDGNAFSEGSTVLRKNNATFAISALIENAHPEAQMLVAEKESDENIKIYLVGEDGPVPRALSNL</sequence>
<feature type="signal peptide" evidence="2">
    <location>
        <begin position="1"/>
        <end position="33"/>
    </location>
</feature>
<feature type="chain" id="PRO_0000448324" description="Ulvan lyase">
    <location>
        <begin position="34"/>
        <end position="485"/>
    </location>
</feature>
<feature type="region of interest" description="Disordered" evidence="3">
    <location>
        <begin position="108"/>
        <end position="128"/>
    </location>
</feature>
<feature type="compositionally biased region" description="Basic and acidic residues" evidence="3">
    <location>
        <begin position="115"/>
        <end position="128"/>
    </location>
</feature>
<feature type="active site" description="Proton donor" evidence="1">
    <location>
        <position position="127"/>
    </location>
</feature>
<feature type="active site" description="Proton acceptor" evidence="1">
    <location>
        <position position="192"/>
    </location>
</feature>
<feature type="binding site" evidence="1">
    <location>
        <position position="64"/>
    </location>
    <ligand>
        <name>substrate</name>
    </ligand>
</feature>
<feature type="binding site" evidence="1">
    <location>
        <position position="126"/>
    </location>
    <ligand>
        <name>substrate</name>
    </ligand>
</feature>
<feature type="binding site" evidence="1">
    <location>
        <position position="129"/>
    </location>
    <ligand>
        <name>substrate</name>
    </ligand>
</feature>
<feature type="binding site" evidence="1">
    <location>
        <position position="147"/>
    </location>
    <ligand>
        <name>substrate</name>
    </ligand>
</feature>
<feature type="binding site" evidence="1">
    <location>
        <position position="208"/>
    </location>
    <ligand>
        <name>substrate</name>
    </ligand>
</feature>
<feature type="binding site" evidence="1">
    <location>
        <position position="212"/>
    </location>
    <ligand>
        <name>substrate</name>
    </ligand>
</feature>
<feature type="binding site" evidence="1">
    <location>
        <position position="212"/>
    </location>
    <ligand>
        <name>Zn(2+)</name>
        <dbReference type="ChEBI" id="CHEBI:29105"/>
        <note>structural</note>
    </ligand>
</feature>
<feature type="binding site" evidence="1">
    <location>
        <position position="250"/>
    </location>
    <ligand>
        <name>substrate</name>
    </ligand>
</feature>
<feature type="binding site" evidence="1">
    <location>
        <position position="268"/>
    </location>
    <ligand>
        <name>Zn(2+)</name>
        <dbReference type="ChEBI" id="CHEBI:29105"/>
        <note>structural</note>
    </ligand>
</feature>
<feature type="binding site" evidence="1">
    <location>
        <position position="270"/>
    </location>
    <ligand>
        <name>Zn(2+)</name>
        <dbReference type="ChEBI" id="CHEBI:29105"/>
        <note>structural</note>
    </ligand>
</feature>
<feature type="binding site" evidence="1">
    <location>
        <position position="282"/>
    </location>
    <ligand>
        <name>substrate</name>
    </ligand>
</feature>
<feature type="binding site" evidence="1">
    <location>
        <position position="282"/>
    </location>
    <ligand>
        <name>Zn(2+)</name>
        <dbReference type="ChEBI" id="CHEBI:29105"/>
        <note>structural</note>
    </ligand>
</feature>
<feature type="site" description="Neutralizes the sugar carboxylate group at subsite +1" evidence="1">
    <location>
        <position position="208"/>
    </location>
</feature>
<feature type="lipid moiety-binding region" description="N-palmitoyl cysteine" evidence="2">
    <location>
        <position position="34"/>
    </location>
</feature>
<feature type="lipid moiety-binding region" description="S-diacylglycerol cysteine" evidence="2">
    <location>
        <position position="34"/>
    </location>
</feature>
<keyword id="KW-1003">Cell membrane</keyword>
<keyword id="KW-0449">Lipoprotein</keyword>
<keyword id="KW-0456">Lyase</keyword>
<keyword id="KW-0472">Membrane</keyword>
<keyword id="KW-0479">Metal-binding</keyword>
<keyword id="KW-0564">Palmitate</keyword>
<keyword id="KW-0732">Signal</keyword>
<keyword id="KW-0862">Zinc</keyword>
<comment type="function">
    <text evidence="4">Ulvan lyase involved in ulvan degradation. Ulvan is the main polysaccharide component of the Ulvales (green seaweed) cell wall. It is composed of disaccharide building blocks comprising 3-sulfated rhamnose (Rha3S) linked to D-glucuronic acid (GlcA), L-iduronic acid (IduA), or D-xylose (Xyl). Ulvan lyase catalyzes the endolytic cleavage of the glycosidic bond between Rha3S and the uronic acids GlcA or IduA, producing oligosaccharides that have unsaturated 4-deoxy-L-threo-hex-4-enopyranosiduronic acid (deltaUA) at the non-reducing end. This results eventually in the degradation of the ulvan polysaccharide into deltaUA-Rha3S disaccharides and deltaUA-Rha3S-Xyl-Rha3S tetrasaccharides.</text>
</comment>
<comment type="biophysicochemical properties">
    <phDependence>
        <text evidence="4">Optimum pH is 7.5.</text>
    </phDependence>
    <temperatureDependence>
        <text evidence="4">Optimum temperature is 45 degrees Celsius.</text>
    </temperatureDependence>
</comment>
<comment type="subcellular location">
    <subcellularLocation>
        <location evidence="2">Cell membrane</location>
        <topology evidence="2">Lipid-anchor</topology>
    </subcellularLocation>
</comment>
<comment type="similarity">
    <text evidence="5">Belongs to the polysaccharide lyase 25 family.</text>
</comment>
<accession>P9WF05</accession>
<name>UL25_ALTSL</name>
<evidence type="ECO:0000250" key="1">
    <source>
        <dbReference type="UniProtKB" id="A0A1W2VMZ5"/>
    </source>
</evidence>
<evidence type="ECO:0000255" key="2">
    <source>
        <dbReference type="PROSITE-ProRule" id="PRU00303"/>
    </source>
</evidence>
<evidence type="ECO:0000256" key="3">
    <source>
        <dbReference type="SAM" id="MobiDB-lite"/>
    </source>
</evidence>
<evidence type="ECO:0000269" key="4">
    <source ref="2"/>
</evidence>
<evidence type="ECO:0000305" key="5"/>
<proteinExistence type="evidence at protein level"/>
<gene>
    <name type="ORF">LOR_29</name>
</gene>
<reference key="1">
    <citation type="journal article" date="2014" name="Genome Announc.">
        <title>Draft genome sequences of two ulvan-degrading isolates, strains LTR and LOR, that belong to the Alteromonas genus.</title>
        <authorList>
            <person name="Kopel M."/>
            <person name="Helbert W."/>
            <person name="Henrissat B."/>
            <person name="Doniger T."/>
            <person name="Banin E."/>
        </authorList>
    </citation>
    <scope>NUCLEOTIDE SEQUENCE [LARGE SCALE GENOMIC DNA]</scope>
    <source>
        <strain>LOR</strain>
    </source>
</reference>
<reference key="2">
    <citation type="journal article" date="2017" name="Algal Res.">
        <title>Functional characterization of a novel 'ulvan utilization loci' found in Alteromonas sp. LOR genome.</title>
        <authorList>
            <person name="Foran E."/>
            <person name="Buravenkov V."/>
            <person name="Kopel M."/>
            <person name="Mizrahi N."/>
            <person name="Shoshani S."/>
            <person name="Helbert W."/>
            <person name="Banin E."/>
        </authorList>
    </citation>
    <scope>FUNCTION</scope>
    <scope>CATALYTIC ACTIVITY</scope>
    <scope>BIOPHYSICOCHEMICAL PROPERTIES</scope>
</reference>
<dbReference type="EC" id="4.2.2.-" evidence="4"/>
<dbReference type="SMR" id="P9WF05"/>
<dbReference type="GO" id="GO:0005886">
    <property type="term" value="C:plasma membrane"/>
    <property type="evidence" value="ECO:0007669"/>
    <property type="project" value="UniProtKB-SubCell"/>
</dbReference>
<dbReference type="GO" id="GO:0016829">
    <property type="term" value="F:lyase activity"/>
    <property type="evidence" value="ECO:0007669"/>
    <property type="project" value="UniProtKB-KW"/>
</dbReference>
<dbReference type="GO" id="GO:0046872">
    <property type="term" value="F:metal ion binding"/>
    <property type="evidence" value="ECO:0007669"/>
    <property type="project" value="UniProtKB-KW"/>
</dbReference>
<dbReference type="InterPro" id="IPR036278">
    <property type="entry name" value="Sialidase_sf"/>
</dbReference>
<dbReference type="Pfam" id="PF15892">
    <property type="entry name" value="BNR_4"/>
    <property type="match status" value="1"/>
</dbReference>
<dbReference type="SUPFAM" id="SSF50939">
    <property type="entry name" value="Sialidases"/>
    <property type="match status" value="1"/>
</dbReference>
<dbReference type="PROSITE" id="PS51257">
    <property type="entry name" value="PROKAR_LIPOPROTEIN"/>
    <property type="match status" value="1"/>
</dbReference>